<dbReference type="EC" id="2.1.1.14" evidence="1"/>
<dbReference type="EMBL" id="CP000802">
    <property type="protein sequence ID" value="ABV08240.1"/>
    <property type="molecule type" value="Genomic_DNA"/>
</dbReference>
<dbReference type="RefSeq" id="WP_000153967.1">
    <property type="nucleotide sequence ID" value="NC_009800.1"/>
</dbReference>
<dbReference type="SMR" id="A8A6T6"/>
<dbReference type="KEGG" id="ecx:EcHS_A4053"/>
<dbReference type="HOGENOM" id="CLU_013175_0_0_6"/>
<dbReference type="UniPathway" id="UPA00051">
    <property type="reaction ID" value="UER00082"/>
</dbReference>
<dbReference type="GO" id="GO:0003871">
    <property type="term" value="F:5-methyltetrahydropteroyltriglutamate-homocysteine S-methyltransferase activity"/>
    <property type="evidence" value="ECO:0007669"/>
    <property type="project" value="UniProtKB-UniRule"/>
</dbReference>
<dbReference type="GO" id="GO:0008270">
    <property type="term" value="F:zinc ion binding"/>
    <property type="evidence" value="ECO:0007669"/>
    <property type="project" value="InterPro"/>
</dbReference>
<dbReference type="GO" id="GO:0009086">
    <property type="term" value="P:methionine biosynthetic process"/>
    <property type="evidence" value="ECO:0007669"/>
    <property type="project" value="UniProtKB-UniRule"/>
</dbReference>
<dbReference type="GO" id="GO:0032259">
    <property type="term" value="P:methylation"/>
    <property type="evidence" value="ECO:0007669"/>
    <property type="project" value="UniProtKB-KW"/>
</dbReference>
<dbReference type="CDD" id="cd03311">
    <property type="entry name" value="CIMS_C_terminal_like"/>
    <property type="match status" value="1"/>
</dbReference>
<dbReference type="CDD" id="cd03312">
    <property type="entry name" value="CIMS_N_terminal_like"/>
    <property type="match status" value="1"/>
</dbReference>
<dbReference type="FunFam" id="3.20.20.210:FF:000002">
    <property type="entry name" value="5-methyltetrahydropteroyltriglutamate--homocysteine methyltransferase"/>
    <property type="match status" value="1"/>
</dbReference>
<dbReference type="FunFam" id="3.20.20.210:FF:000003">
    <property type="entry name" value="5-methyltetrahydropteroyltriglutamate--homocysteine methyltransferase"/>
    <property type="match status" value="1"/>
</dbReference>
<dbReference type="Gene3D" id="3.20.20.210">
    <property type="match status" value="2"/>
</dbReference>
<dbReference type="HAMAP" id="MF_00172">
    <property type="entry name" value="Meth_synth"/>
    <property type="match status" value="1"/>
</dbReference>
<dbReference type="InterPro" id="IPR013215">
    <property type="entry name" value="Cbl-indep_Met_Synth_N"/>
</dbReference>
<dbReference type="InterPro" id="IPR006276">
    <property type="entry name" value="Cobalamin-indep_Met_synthase"/>
</dbReference>
<dbReference type="InterPro" id="IPR002629">
    <property type="entry name" value="Met_Synth_C/arc"/>
</dbReference>
<dbReference type="InterPro" id="IPR038071">
    <property type="entry name" value="UROD/MetE-like_sf"/>
</dbReference>
<dbReference type="NCBIfam" id="TIGR01371">
    <property type="entry name" value="met_syn_B12ind"/>
    <property type="match status" value="1"/>
</dbReference>
<dbReference type="NCBIfam" id="NF003556">
    <property type="entry name" value="PRK05222.1"/>
    <property type="match status" value="1"/>
</dbReference>
<dbReference type="PANTHER" id="PTHR30519">
    <property type="entry name" value="5-METHYLTETRAHYDROPTEROYLTRIGLUTAMATE--HOMOCYSTEINE METHYLTRANSFERASE"/>
    <property type="match status" value="1"/>
</dbReference>
<dbReference type="Pfam" id="PF08267">
    <property type="entry name" value="Meth_synt_1"/>
    <property type="match status" value="1"/>
</dbReference>
<dbReference type="Pfam" id="PF01717">
    <property type="entry name" value="Meth_synt_2"/>
    <property type="match status" value="1"/>
</dbReference>
<dbReference type="PIRSF" id="PIRSF000382">
    <property type="entry name" value="MeTrfase_B12_ind"/>
    <property type="match status" value="1"/>
</dbReference>
<dbReference type="SUPFAM" id="SSF51726">
    <property type="entry name" value="UROD/MetE-like"/>
    <property type="match status" value="2"/>
</dbReference>
<accession>A8A6T6</accession>
<protein>
    <recommendedName>
        <fullName evidence="1">5-methyltetrahydropteroyltriglutamate--homocysteine methyltransferase</fullName>
        <ecNumber evidence="1">2.1.1.14</ecNumber>
    </recommendedName>
    <alternativeName>
        <fullName evidence="1">Cobalamin-independent methionine synthase</fullName>
    </alternativeName>
    <alternativeName>
        <fullName evidence="1">Methionine synthase, vitamin-B12 independent isozyme</fullName>
    </alternativeName>
</protein>
<keyword id="KW-0028">Amino-acid biosynthesis</keyword>
<keyword id="KW-0479">Metal-binding</keyword>
<keyword id="KW-0486">Methionine biosynthesis</keyword>
<keyword id="KW-0489">Methyltransferase</keyword>
<keyword id="KW-0677">Repeat</keyword>
<keyword id="KW-0808">Transferase</keyword>
<keyword id="KW-0862">Zinc</keyword>
<evidence type="ECO:0000255" key="1">
    <source>
        <dbReference type="HAMAP-Rule" id="MF_00172"/>
    </source>
</evidence>
<name>METE_ECOHS</name>
<gene>
    <name evidence="1" type="primary">metE</name>
    <name type="ordered locus">EcHS_A4053</name>
</gene>
<feature type="chain" id="PRO_1000058314" description="5-methyltetrahydropteroyltriglutamate--homocysteine methyltransferase">
    <location>
        <begin position="1"/>
        <end position="753"/>
    </location>
</feature>
<feature type="active site" description="Proton donor" evidence="1">
    <location>
        <position position="694"/>
    </location>
</feature>
<feature type="binding site" evidence="1">
    <location>
        <begin position="17"/>
        <end position="20"/>
    </location>
    <ligand>
        <name>5-methyltetrahydropteroyltri-L-glutamate</name>
        <dbReference type="ChEBI" id="CHEBI:58207"/>
    </ligand>
</feature>
<feature type="binding site" evidence="1">
    <location>
        <position position="117"/>
    </location>
    <ligand>
        <name>5-methyltetrahydropteroyltri-L-glutamate</name>
        <dbReference type="ChEBI" id="CHEBI:58207"/>
    </ligand>
</feature>
<feature type="binding site" evidence="1">
    <location>
        <begin position="431"/>
        <end position="433"/>
    </location>
    <ligand>
        <name>L-homocysteine</name>
        <dbReference type="ChEBI" id="CHEBI:58199"/>
    </ligand>
</feature>
<feature type="binding site" evidence="1">
    <location>
        <begin position="431"/>
        <end position="433"/>
    </location>
    <ligand>
        <name>L-methionine</name>
        <dbReference type="ChEBI" id="CHEBI:57844"/>
    </ligand>
</feature>
<feature type="binding site" evidence="1">
    <location>
        <position position="484"/>
    </location>
    <ligand>
        <name>L-homocysteine</name>
        <dbReference type="ChEBI" id="CHEBI:58199"/>
    </ligand>
</feature>
<feature type="binding site" evidence="1">
    <location>
        <position position="484"/>
    </location>
    <ligand>
        <name>L-methionine</name>
        <dbReference type="ChEBI" id="CHEBI:57844"/>
    </ligand>
</feature>
<feature type="binding site" evidence="1">
    <location>
        <begin position="515"/>
        <end position="516"/>
    </location>
    <ligand>
        <name>5-methyltetrahydropteroyltri-L-glutamate</name>
        <dbReference type="ChEBI" id="CHEBI:58207"/>
    </ligand>
</feature>
<feature type="binding site" evidence="1">
    <location>
        <position position="561"/>
    </location>
    <ligand>
        <name>5-methyltetrahydropteroyltri-L-glutamate</name>
        <dbReference type="ChEBI" id="CHEBI:58207"/>
    </ligand>
</feature>
<feature type="binding site" evidence="1">
    <location>
        <position position="599"/>
    </location>
    <ligand>
        <name>L-homocysteine</name>
        <dbReference type="ChEBI" id="CHEBI:58199"/>
    </ligand>
</feature>
<feature type="binding site" evidence="1">
    <location>
        <position position="599"/>
    </location>
    <ligand>
        <name>L-methionine</name>
        <dbReference type="ChEBI" id="CHEBI:57844"/>
    </ligand>
</feature>
<feature type="binding site" evidence="1">
    <location>
        <position position="605"/>
    </location>
    <ligand>
        <name>5-methyltetrahydropteroyltri-L-glutamate</name>
        <dbReference type="ChEBI" id="CHEBI:58207"/>
    </ligand>
</feature>
<feature type="binding site" evidence="1">
    <location>
        <position position="641"/>
    </location>
    <ligand>
        <name>Zn(2+)</name>
        <dbReference type="ChEBI" id="CHEBI:29105"/>
        <note>catalytic</note>
    </ligand>
</feature>
<feature type="binding site" evidence="1">
    <location>
        <position position="643"/>
    </location>
    <ligand>
        <name>Zn(2+)</name>
        <dbReference type="ChEBI" id="CHEBI:29105"/>
        <note>catalytic</note>
    </ligand>
</feature>
<feature type="binding site" evidence="1">
    <location>
        <position position="665"/>
    </location>
    <ligand>
        <name>Zn(2+)</name>
        <dbReference type="ChEBI" id="CHEBI:29105"/>
        <note>catalytic</note>
    </ligand>
</feature>
<feature type="binding site" evidence="1">
    <location>
        <position position="726"/>
    </location>
    <ligand>
        <name>Zn(2+)</name>
        <dbReference type="ChEBI" id="CHEBI:29105"/>
        <note>catalytic</note>
    </ligand>
</feature>
<comment type="function">
    <text evidence="1">Catalyzes the transfer of a methyl group from 5-methyltetrahydrofolate to homocysteine resulting in methionine formation.</text>
</comment>
<comment type="catalytic activity">
    <reaction evidence="1">
        <text>5-methyltetrahydropteroyltri-L-glutamate + L-homocysteine = tetrahydropteroyltri-L-glutamate + L-methionine</text>
        <dbReference type="Rhea" id="RHEA:21196"/>
        <dbReference type="ChEBI" id="CHEBI:57844"/>
        <dbReference type="ChEBI" id="CHEBI:58140"/>
        <dbReference type="ChEBI" id="CHEBI:58199"/>
        <dbReference type="ChEBI" id="CHEBI:58207"/>
        <dbReference type="EC" id="2.1.1.14"/>
    </reaction>
</comment>
<comment type="cofactor">
    <cofactor evidence="1">
        <name>Zn(2+)</name>
        <dbReference type="ChEBI" id="CHEBI:29105"/>
    </cofactor>
    <text evidence="1">Binds 1 zinc ion per subunit.</text>
</comment>
<comment type="pathway">
    <text evidence="1">Amino-acid biosynthesis; L-methionine biosynthesis via de novo pathway; L-methionine from L-homocysteine (MetE route): step 1/1.</text>
</comment>
<comment type="similarity">
    <text evidence="1">Belongs to the vitamin-B12 independent methionine synthase family.</text>
</comment>
<sequence length="753" mass="84707">MTILNHTLGFPRVGLRRELKKAQESYWAGNSTREELLTVGRELRARHWDQQKQAGIDLLPVGDFAWYDHVLTTSLLLGNVPPRHQNKDGSVDIDTLFRIGRGRAPTGEPAAAAEMTKWFNTNYHYMVPEFVKGQQFKLTWTQLLEEVDEALALGHNVKPVLLGPVTYLWLGKVKGEQFDRLSLLNDILPVYQQVLAELAKRGIEWVQIDEPALVLELPQAWLDAYKPAYDALQGQVKLLLTTYFEGVTPNLDTITALPVQGLHVDLVHGKDDVAELHKRLPSDWLLSAGLINGRNVWRADLTEKYAQIKDIVGKRDLWVASSCSLLHSPIDLSVETRLDAEVKSWFAFALQKCHELALLRDALNSGDTAALAEWSAPIQARRHSTRVHNPAVEKRLAAITAQDSQRANVYEVRAEAQRARFKLPAWPTTTIGSFPQTTEIRTLRLDFKKGNLDANNYRTGIAEHIKQAIVEQERLGLDVLVHGEAERNDMVEYFGEHLDGFVFTQNGWVQSYGSRCVKPPIVIGDISRPAPITVEWAKYAQSLTDKPVKGMLTGPVTILCWSFPREDVSRETIAKQIALALRDEVADLEAAGIGIIQIDEPALREGLPLRRSDWDAYLQWGVEAFRINAAVAKDDTQIHTHMCYCEFNDIMDSIAALDADVITIETSRSDMELLESFEEFDYPNEIGPGVYDIHSPNVPSVEWIEALLKKAAKRIPAERLWVNPDCGLKTRGWPETRAALANMVQAAQNLRRG</sequence>
<organism>
    <name type="scientific">Escherichia coli O9:H4 (strain HS)</name>
    <dbReference type="NCBI Taxonomy" id="331112"/>
    <lineage>
        <taxon>Bacteria</taxon>
        <taxon>Pseudomonadati</taxon>
        <taxon>Pseudomonadota</taxon>
        <taxon>Gammaproteobacteria</taxon>
        <taxon>Enterobacterales</taxon>
        <taxon>Enterobacteriaceae</taxon>
        <taxon>Escherichia</taxon>
    </lineage>
</organism>
<reference key="1">
    <citation type="journal article" date="2008" name="J. Bacteriol.">
        <title>The pangenome structure of Escherichia coli: comparative genomic analysis of E. coli commensal and pathogenic isolates.</title>
        <authorList>
            <person name="Rasko D.A."/>
            <person name="Rosovitz M.J."/>
            <person name="Myers G.S.A."/>
            <person name="Mongodin E.F."/>
            <person name="Fricke W.F."/>
            <person name="Gajer P."/>
            <person name="Crabtree J."/>
            <person name="Sebaihia M."/>
            <person name="Thomson N.R."/>
            <person name="Chaudhuri R."/>
            <person name="Henderson I.R."/>
            <person name="Sperandio V."/>
            <person name="Ravel J."/>
        </authorList>
    </citation>
    <scope>NUCLEOTIDE SEQUENCE [LARGE SCALE GENOMIC DNA]</scope>
    <source>
        <strain>HS</strain>
    </source>
</reference>
<proteinExistence type="inferred from homology"/>